<organism>
    <name type="scientific">Encephalitozoon cuniculi (strain GB-M1)</name>
    <name type="common">Microsporidian parasite</name>
    <dbReference type="NCBI Taxonomy" id="284813"/>
    <lineage>
        <taxon>Eukaryota</taxon>
        <taxon>Fungi</taxon>
        <taxon>Fungi incertae sedis</taxon>
        <taxon>Microsporidia</taxon>
        <taxon>Unikaryonidae</taxon>
        <taxon>Encephalitozoon</taxon>
    </lineage>
</organism>
<dbReference type="EMBL" id="AL590444">
    <property type="protein sequence ID" value="CAD25298.2"/>
    <property type="molecule type" value="Genomic_DNA"/>
</dbReference>
<dbReference type="RefSeq" id="NP_584794.1">
    <property type="nucleotide sequence ID" value="NM_001041144.1"/>
</dbReference>
<dbReference type="SMR" id="Q8SS29"/>
<dbReference type="FunCoup" id="Q8SS29">
    <property type="interactions" value="157"/>
</dbReference>
<dbReference type="STRING" id="284813.Q8SS29"/>
<dbReference type="GeneID" id="858942"/>
<dbReference type="KEGG" id="ecu:ECU04_1100"/>
<dbReference type="VEuPathDB" id="MicrosporidiaDB:ECU04_1100"/>
<dbReference type="HOGENOM" id="CLU_007265_3_5_1"/>
<dbReference type="InParanoid" id="Q8SS29"/>
<dbReference type="OrthoDB" id="342024at2759"/>
<dbReference type="UniPathway" id="UPA00345"/>
<dbReference type="Proteomes" id="UP000000819">
    <property type="component" value="Chromosome IV"/>
</dbReference>
<dbReference type="GO" id="GO:0005737">
    <property type="term" value="C:cytoplasm"/>
    <property type="evidence" value="ECO:0007669"/>
    <property type="project" value="UniProtKB-SubCell"/>
</dbReference>
<dbReference type="GO" id="GO:0003779">
    <property type="term" value="F:actin binding"/>
    <property type="evidence" value="ECO:0007669"/>
    <property type="project" value="UniProtKB-KW"/>
</dbReference>
<dbReference type="GO" id="GO:0005525">
    <property type="term" value="F:GTP binding"/>
    <property type="evidence" value="ECO:0007669"/>
    <property type="project" value="UniProtKB-KW"/>
</dbReference>
<dbReference type="GO" id="GO:0003924">
    <property type="term" value="F:GTPase activity"/>
    <property type="evidence" value="ECO:0007669"/>
    <property type="project" value="InterPro"/>
</dbReference>
<dbReference type="GO" id="GO:0003746">
    <property type="term" value="F:translation elongation factor activity"/>
    <property type="evidence" value="ECO:0007669"/>
    <property type="project" value="UniProtKB-KW"/>
</dbReference>
<dbReference type="CDD" id="cd03693">
    <property type="entry name" value="EF1_alpha_II"/>
    <property type="match status" value="1"/>
</dbReference>
<dbReference type="CDD" id="cd01513">
    <property type="entry name" value="Translation_factor_III"/>
    <property type="match status" value="1"/>
</dbReference>
<dbReference type="Gene3D" id="3.40.50.300">
    <property type="entry name" value="P-loop containing nucleotide triphosphate hydrolases"/>
    <property type="match status" value="1"/>
</dbReference>
<dbReference type="Gene3D" id="2.40.30.10">
    <property type="entry name" value="Translation factors"/>
    <property type="match status" value="2"/>
</dbReference>
<dbReference type="InterPro" id="IPR031157">
    <property type="entry name" value="G_TR_CS"/>
</dbReference>
<dbReference type="InterPro" id="IPR054696">
    <property type="entry name" value="GTP-eEF1A_C"/>
</dbReference>
<dbReference type="InterPro" id="IPR027417">
    <property type="entry name" value="P-loop_NTPase"/>
</dbReference>
<dbReference type="InterPro" id="IPR000795">
    <property type="entry name" value="T_Tr_GTP-bd_dom"/>
</dbReference>
<dbReference type="InterPro" id="IPR050100">
    <property type="entry name" value="TRAFAC_GTPase_members"/>
</dbReference>
<dbReference type="InterPro" id="IPR009000">
    <property type="entry name" value="Transl_B-barrel_sf"/>
</dbReference>
<dbReference type="InterPro" id="IPR009001">
    <property type="entry name" value="Transl_elong_EF1A/Init_IF2_C"/>
</dbReference>
<dbReference type="PANTHER" id="PTHR23115">
    <property type="entry name" value="TRANSLATION FACTOR"/>
    <property type="match status" value="1"/>
</dbReference>
<dbReference type="Pfam" id="PF22594">
    <property type="entry name" value="GTP-eEF1A_C"/>
    <property type="match status" value="1"/>
</dbReference>
<dbReference type="Pfam" id="PF00009">
    <property type="entry name" value="GTP_EFTU"/>
    <property type="match status" value="1"/>
</dbReference>
<dbReference type="PRINTS" id="PR00315">
    <property type="entry name" value="ELONGATNFCT"/>
</dbReference>
<dbReference type="SUPFAM" id="SSF50465">
    <property type="entry name" value="EF-Tu/eEF-1alpha/eIF2-gamma C-terminal domain"/>
    <property type="match status" value="1"/>
</dbReference>
<dbReference type="SUPFAM" id="SSF52540">
    <property type="entry name" value="P-loop containing nucleoside triphosphate hydrolases"/>
    <property type="match status" value="1"/>
</dbReference>
<dbReference type="SUPFAM" id="SSF50447">
    <property type="entry name" value="Translation proteins"/>
    <property type="match status" value="1"/>
</dbReference>
<dbReference type="PROSITE" id="PS00301">
    <property type="entry name" value="G_TR_1"/>
    <property type="match status" value="1"/>
</dbReference>
<dbReference type="PROSITE" id="PS51722">
    <property type="entry name" value="G_TR_2"/>
    <property type="match status" value="1"/>
</dbReference>
<reference key="1">
    <citation type="journal article" date="2001" name="Nature">
        <title>Genome sequence and gene compaction of the eukaryote parasite Encephalitozoon cuniculi.</title>
        <authorList>
            <person name="Katinka M.D."/>
            <person name="Duprat S."/>
            <person name="Cornillot E."/>
            <person name="Metenier G."/>
            <person name="Thomarat F."/>
            <person name="Prensier G."/>
            <person name="Barbe V."/>
            <person name="Peyretaillade E."/>
            <person name="Brottier P."/>
            <person name="Wincker P."/>
            <person name="Delbac F."/>
            <person name="El Alaoui H."/>
            <person name="Peyret P."/>
            <person name="Saurin W."/>
            <person name="Gouy M."/>
            <person name="Weissenbach J."/>
            <person name="Vivares C.P."/>
        </authorList>
    </citation>
    <scope>NUCLEOTIDE SEQUENCE [LARGE SCALE GENOMIC DNA]</scope>
    <source>
        <strain>GB-M1</strain>
    </source>
</reference>
<reference key="2">
    <citation type="journal article" date="2009" name="BMC Genomics">
        <title>Identification of transcriptional signals in Encephalitozoon cuniculi widespread among Microsporidia phylum: support for accurate structural genome annotation.</title>
        <authorList>
            <person name="Peyretaillade E."/>
            <person name="Goncalves O."/>
            <person name="Terrat S."/>
            <person name="Dugat-Bony E."/>
            <person name="Wincker P."/>
            <person name="Cornman R.S."/>
            <person name="Evans J.D."/>
            <person name="Delbac F."/>
            <person name="Peyret P."/>
        </authorList>
    </citation>
    <scope>GENOME REANNOTATION</scope>
    <source>
        <strain>GB-M1</strain>
    </source>
</reference>
<reference key="3">
    <citation type="journal article" date="2006" name="Proteomics">
        <title>Proteomic analysis of the eukaryotic parasite Encephalitozoon cuniculi (microsporidia): a reference map for proteins expressed in late sporogonial stages.</title>
        <authorList>
            <person name="Brosson D."/>
            <person name="Kuhn L."/>
            <person name="Delbac F."/>
            <person name="Garin J."/>
            <person name="Vivares C.P."/>
            <person name="Texier C."/>
        </authorList>
    </citation>
    <scope>IDENTIFICATION BY MASS SPECTROMETRY [LARGE SCALE ANALYSIS]</scope>
    <scope>DEVELOPMENTAL STAGE</scope>
</reference>
<protein>
    <recommendedName>
        <fullName>Elongation factor 1-alpha</fullName>
        <shortName>EF-1-alpha</shortName>
    </recommendedName>
    <alternativeName>
        <fullName>Eukaryotic elongation factor 1A</fullName>
        <shortName>eEF1A</shortName>
    </alternativeName>
    <alternativeName>
        <fullName>Translation elongation factor 1A</fullName>
    </alternativeName>
</protein>
<feature type="chain" id="PRO_0000383139" description="Elongation factor 1-alpha">
    <location>
        <begin position="1"/>
        <end position="471"/>
    </location>
</feature>
<feature type="domain" description="tr-type G" evidence="2">
    <location>
        <begin position="10"/>
        <end position="239"/>
    </location>
</feature>
<feature type="region of interest" description="G1" evidence="2">
    <location>
        <begin position="19"/>
        <end position="26"/>
    </location>
</feature>
<feature type="region of interest" description="G2" evidence="2">
    <location>
        <begin position="75"/>
        <end position="79"/>
    </location>
</feature>
<feature type="region of interest" description="G3" evidence="2">
    <location>
        <begin position="96"/>
        <end position="99"/>
    </location>
</feature>
<feature type="region of interest" description="G4" evidence="2">
    <location>
        <begin position="156"/>
        <end position="159"/>
    </location>
</feature>
<feature type="region of interest" description="G5" evidence="2">
    <location>
        <begin position="196"/>
        <end position="198"/>
    </location>
</feature>
<feature type="binding site" evidence="1">
    <location>
        <begin position="19"/>
        <end position="26"/>
    </location>
    <ligand>
        <name>GTP</name>
        <dbReference type="ChEBI" id="CHEBI:37565"/>
    </ligand>
</feature>
<feature type="binding site" evidence="1">
    <location>
        <begin position="96"/>
        <end position="100"/>
    </location>
    <ligand>
        <name>GTP</name>
        <dbReference type="ChEBI" id="CHEBI:37565"/>
    </ligand>
</feature>
<feature type="binding site" evidence="1">
    <location>
        <begin position="156"/>
        <end position="159"/>
    </location>
    <ligand>
        <name>GTP</name>
        <dbReference type="ChEBI" id="CHEBI:37565"/>
    </ligand>
</feature>
<evidence type="ECO:0000250" key="1"/>
<evidence type="ECO:0000255" key="2">
    <source>
        <dbReference type="PROSITE-ProRule" id="PRU01059"/>
    </source>
</evidence>
<evidence type="ECO:0000269" key="3">
    <source>
    </source>
</evidence>
<keyword id="KW-0009">Actin-binding</keyword>
<keyword id="KW-0963">Cytoplasm</keyword>
<keyword id="KW-0251">Elongation factor</keyword>
<keyword id="KW-0342">GTP-binding</keyword>
<keyword id="KW-0547">Nucleotide-binding</keyword>
<keyword id="KW-0648">Protein biosynthesis</keyword>
<keyword id="KW-1185">Reference proteome</keyword>
<comment type="function">
    <text evidence="1">GTP-binding component of the eukaryotic elongation factor 1 complex (eEF1). In its active GTP-bound form, binds to and delivers aminoacyl-tRNA to the A-site of ribosomes during protein biosynthesis. In the presence of a correct codon-anticodon match between the aminoacyl-tRNA and the A-site codon of the ribosome-bound mRNA, the ribosome acts as a GTPase activator and the GTP is hydrolyzed. The inactive GDP-bound form leaves the ribosome and must be recycled by its guanine nucleotide exchange factor (GEF) (eEF1B subcomplex) before binding another molecule of aminoacyl-tRNA. Required for nuclear export of aminoacyl-tRNAs. May also be involved in translational quality control by targeting cotranslationally damaged proteins to the proteasome (By similarity).</text>
</comment>
<comment type="pathway">
    <text>Protein biosynthesis; polypeptide chain elongation.</text>
</comment>
<comment type="subunit">
    <text evidence="1">Component of the eukaryotic elongation factor 1 complex (eEF1).</text>
</comment>
<comment type="subcellular location">
    <subcellularLocation>
        <location evidence="1">Cytoplasm</location>
    </subcellularLocation>
</comment>
<comment type="developmental stage">
    <text evidence="3">Expressed in late sporogonial stages.</text>
</comment>
<comment type="similarity">
    <text evidence="2">Belongs to the TRAFAC class translation factor GTPase superfamily. Classic translation factor GTPase family. EF-Tu/EF-1A subfamily.</text>
</comment>
<gene>
    <name type="primary">TEF1</name>
    <name type="ordered locus">ECU04_1100</name>
</gene>
<name>EF1A_ENCCU</name>
<proteinExistence type="evidence at protein level"/>
<sequence length="471" mass="51587">MATKVEDDSKPRLNACFIGHVDSGKSTTVGMLSYQLGAVDKREMEKYEKEAALNNKETFYLAYLTDKTDAERKRGITITTTLVNLPTEKFNINILDCPGHKDFVKNMVTGASQADVAVVIVPASGFESCVGVGGMLKTHIMISGILGCEKLIVCVNKMDEIPENKRMEKFNEVSAEMLRIVKRSHKDKNPIIIPISAFKGINLTKKGEKFEWFKGWKEKEGSSVIYTLEEALNYQDVPERHNDKPLRMPITKVCSIAGVGKIFTGRVEYGTITPNLKITIQPAGVVGETRSVEIHNKPRSMIPCGENCGVALKGGVIGEIDKVDAGHVISANDENKAVAYPGAKIRTIVVGRPKGLSPGYTPQINFGNCHSPGRIAKILSKVVGKEVHENPENVANGENFTGIVVFQKPLVIDKMERFQNLAKFALMDSNGVVGIGNVMEPLTRDQLLKDYGIDLNEDPKAAKKAASKKKA</sequence>
<accession>Q8SS29</accession>